<feature type="chain" id="PRO_0000147117" description="Large ribosomal subunit protein uL16">
    <location>
        <begin position="1"/>
        <end position="220"/>
    </location>
</feature>
<sequence>MGRRPARCYRQIKNKPYPKSRFCRGVPDPKIRIYDVGMKKKGVDEFPFCVHLVSWEKENVSSEALEAARIACNKYMTKFAGKDAFHLRVRVHPFHVLRINKMLSCAGADRLQTGMRGAFGKPQGVCARVAIGQVLLSVRCKDNNSHNAQEALRRAKFKFPGRQKIIVSRKWGFTKINRADYPRLKSENRILPDGVNAKLLGCHGRLANRKPGRAFIDAVA</sequence>
<dbReference type="EMBL" id="AF227620">
    <property type="protein sequence ID" value="AAF34765.1"/>
    <property type="molecule type" value="mRNA"/>
</dbReference>
<dbReference type="SMR" id="Q9M5M7"/>
<dbReference type="GO" id="GO:1990904">
    <property type="term" value="C:ribonucleoprotein complex"/>
    <property type="evidence" value="ECO:0007669"/>
    <property type="project" value="UniProtKB-KW"/>
</dbReference>
<dbReference type="GO" id="GO:0005840">
    <property type="term" value="C:ribosome"/>
    <property type="evidence" value="ECO:0007669"/>
    <property type="project" value="UniProtKB-KW"/>
</dbReference>
<dbReference type="GO" id="GO:0003735">
    <property type="term" value="F:structural constituent of ribosome"/>
    <property type="evidence" value="ECO:0007669"/>
    <property type="project" value="InterPro"/>
</dbReference>
<dbReference type="GO" id="GO:0006412">
    <property type="term" value="P:translation"/>
    <property type="evidence" value="ECO:0007669"/>
    <property type="project" value="InterPro"/>
</dbReference>
<dbReference type="CDD" id="cd01433">
    <property type="entry name" value="Ribosomal_L16_L10e"/>
    <property type="match status" value="1"/>
</dbReference>
<dbReference type="FunFam" id="3.90.1170.10:FF:000002">
    <property type="entry name" value="60S ribosomal protein L10"/>
    <property type="match status" value="1"/>
</dbReference>
<dbReference type="Gene3D" id="3.90.1170.10">
    <property type="entry name" value="Ribosomal protein L10e/L16"/>
    <property type="match status" value="1"/>
</dbReference>
<dbReference type="InterPro" id="IPR047873">
    <property type="entry name" value="Ribosomal_uL16"/>
</dbReference>
<dbReference type="InterPro" id="IPR018255">
    <property type="entry name" value="Ribosomal_uL16_CS_euk_arc"/>
</dbReference>
<dbReference type="InterPro" id="IPR016180">
    <property type="entry name" value="Ribosomal_uL16_dom"/>
</dbReference>
<dbReference type="InterPro" id="IPR001197">
    <property type="entry name" value="Ribosomal_uL16_euk_arch"/>
</dbReference>
<dbReference type="InterPro" id="IPR036920">
    <property type="entry name" value="Ribosomal_uL16_sf"/>
</dbReference>
<dbReference type="NCBIfam" id="NF003239">
    <property type="entry name" value="PRK04199.1-4"/>
    <property type="match status" value="1"/>
</dbReference>
<dbReference type="NCBIfam" id="TIGR00279">
    <property type="entry name" value="uL16_euk_arch"/>
    <property type="match status" value="1"/>
</dbReference>
<dbReference type="PANTHER" id="PTHR11726">
    <property type="entry name" value="60S RIBOSOMAL PROTEIN L10"/>
    <property type="match status" value="1"/>
</dbReference>
<dbReference type="Pfam" id="PF00252">
    <property type="entry name" value="Ribosomal_L16"/>
    <property type="match status" value="1"/>
</dbReference>
<dbReference type="PIRSF" id="PIRSF005590">
    <property type="entry name" value="Ribosomal_L10"/>
    <property type="match status" value="1"/>
</dbReference>
<dbReference type="SUPFAM" id="SSF54686">
    <property type="entry name" value="Ribosomal protein L16p/L10e"/>
    <property type="match status" value="1"/>
</dbReference>
<dbReference type="PROSITE" id="PS01257">
    <property type="entry name" value="RIBOSOMAL_L10E"/>
    <property type="match status" value="1"/>
</dbReference>
<organism>
    <name type="scientific">Euphorbia esula</name>
    <name type="common">Leafy spurge</name>
    <dbReference type="NCBI Taxonomy" id="3993"/>
    <lineage>
        <taxon>Eukaryota</taxon>
        <taxon>Viridiplantae</taxon>
        <taxon>Streptophyta</taxon>
        <taxon>Embryophyta</taxon>
        <taxon>Tracheophyta</taxon>
        <taxon>Spermatophyta</taxon>
        <taxon>Magnoliopsida</taxon>
        <taxon>eudicotyledons</taxon>
        <taxon>Gunneridae</taxon>
        <taxon>Pentapetalae</taxon>
        <taxon>rosids</taxon>
        <taxon>fabids</taxon>
        <taxon>Malpighiales</taxon>
        <taxon>Euphorbiaceae</taxon>
        <taxon>Euphorbioideae</taxon>
        <taxon>Euphorbieae</taxon>
        <taxon>Euphorbia</taxon>
        <taxon>Euphorbia subgen. Esula</taxon>
        <taxon>Euphorbia sect. Esula</taxon>
    </lineage>
</organism>
<reference key="1">
    <citation type="submission" date="2000-01" db="EMBL/GenBank/DDBJ databases">
        <title>Identification of mRNAs expressed in underground adventitious buds of Euphorbia esula (leafy spurge).</title>
        <authorList>
            <person name="Anderson J.V."/>
            <person name="Horvath D.P."/>
        </authorList>
    </citation>
    <scope>NUCLEOTIDE SEQUENCE [MRNA]</scope>
</reference>
<accession>Q9M5M7</accession>
<gene>
    <name type="primary">RPL10</name>
</gene>
<keyword id="KW-0687">Ribonucleoprotein</keyword>
<keyword id="KW-0689">Ribosomal protein</keyword>
<comment type="subunit">
    <text evidence="1">Component of the small ribosomal subunit. Mature ribosomes consist of a small (40S) and a large (60S) subunit. The 40S subunit contains about 33 different proteins and 1 molecule of RNA (18S). The 60S subunit contains about 49 different proteins and 3 molecules of RNA (25S, 5.8S and 5S) (By similarity).</text>
</comment>
<comment type="similarity">
    <text evidence="2">Belongs to the universal ribosomal protein uL16 family.</text>
</comment>
<protein>
    <recommendedName>
        <fullName evidence="2">Large ribosomal subunit protein uL16</fullName>
    </recommendedName>
    <alternativeName>
        <fullName>60S ribosomal protein L10</fullName>
    </alternativeName>
</protein>
<name>RL10_EUPES</name>
<evidence type="ECO:0000250" key="1"/>
<evidence type="ECO:0000305" key="2"/>
<proteinExistence type="evidence at transcript level"/>